<evidence type="ECO:0000255" key="1">
    <source>
        <dbReference type="HAMAP-Rule" id="MF_00072"/>
    </source>
</evidence>
<sequence>MSPSEYALEVAKRRTFAIISHPDAGKTTITEKVLLFGHAIQTAGTVKGRGSSHHAKSDWMEMEKQRGISITTSVMQFPYGGCLVNLLDTPGHEDFSEDTYRTLTAVDCCLMVIDAAKGVEDRTRKLMEVTRLRDTPILTFMNKLDREIRDPMEVLDEVERELNIACSPITWPIGCGKSFKGVYHLHKDETYLYQSGKGHTIQEVRIVKGLNNPDLDVAVGEDLAKQFRQELELVQGASHEFDHEAFLSGDLTPVFFGTALGNFGVDHMLDGLVEWAPAPMPRKTDTRVVVASEEKFTGFVFKIQANMDPKHRDRVAFMRVVSGRFEKGMKLRQVRTKKDVVISDALTFMAGDRSHVEEAYAGDIIGLHNHGTIQIGDTFTQGEDMKFTGIPNFAPELFRRIRLRDPLKQKQLLKGLVQLSEEGAVQVFRPLSNNDLIVGAVGVLQFEVVSSRLKSEYNVEAVYESVNVSTARWVECNDVKKFEEFKRKNELNLALDGGDNLSYIAPTMVNLNITQERYPDVIFRKTREH</sequence>
<proteinExistence type="inferred from homology"/>
<dbReference type="EMBL" id="BX936398">
    <property type="protein sequence ID" value="CAH19815.1"/>
    <property type="molecule type" value="Genomic_DNA"/>
</dbReference>
<dbReference type="RefSeq" id="WP_011191681.1">
    <property type="nucleotide sequence ID" value="NC_006155.1"/>
</dbReference>
<dbReference type="SMR" id="Q66EW6"/>
<dbReference type="GeneID" id="49787425"/>
<dbReference type="KEGG" id="ypo:BZ17_1984"/>
<dbReference type="KEGG" id="yps:YPTB0575"/>
<dbReference type="PATRIC" id="fig|273123.14.peg.2110"/>
<dbReference type="Proteomes" id="UP000001011">
    <property type="component" value="Chromosome"/>
</dbReference>
<dbReference type="GO" id="GO:0005829">
    <property type="term" value="C:cytosol"/>
    <property type="evidence" value="ECO:0007669"/>
    <property type="project" value="TreeGrafter"/>
</dbReference>
<dbReference type="GO" id="GO:0005525">
    <property type="term" value="F:GTP binding"/>
    <property type="evidence" value="ECO:0007669"/>
    <property type="project" value="UniProtKB-UniRule"/>
</dbReference>
<dbReference type="GO" id="GO:0003924">
    <property type="term" value="F:GTPase activity"/>
    <property type="evidence" value="ECO:0007669"/>
    <property type="project" value="InterPro"/>
</dbReference>
<dbReference type="GO" id="GO:0097216">
    <property type="term" value="F:guanosine tetraphosphate binding"/>
    <property type="evidence" value="ECO:0007669"/>
    <property type="project" value="UniProtKB-ARBA"/>
</dbReference>
<dbReference type="GO" id="GO:0016150">
    <property type="term" value="F:translation release factor activity, codon nonspecific"/>
    <property type="evidence" value="ECO:0007669"/>
    <property type="project" value="TreeGrafter"/>
</dbReference>
<dbReference type="GO" id="GO:0016149">
    <property type="term" value="F:translation release factor activity, codon specific"/>
    <property type="evidence" value="ECO:0007669"/>
    <property type="project" value="UniProtKB-UniRule"/>
</dbReference>
<dbReference type="GO" id="GO:0006449">
    <property type="term" value="P:regulation of translational termination"/>
    <property type="evidence" value="ECO:0007669"/>
    <property type="project" value="UniProtKB-UniRule"/>
</dbReference>
<dbReference type="CDD" id="cd04169">
    <property type="entry name" value="RF3"/>
    <property type="match status" value="1"/>
</dbReference>
<dbReference type="CDD" id="cd03689">
    <property type="entry name" value="RF3_II"/>
    <property type="match status" value="1"/>
</dbReference>
<dbReference type="CDD" id="cd16259">
    <property type="entry name" value="RF3_III"/>
    <property type="match status" value="1"/>
</dbReference>
<dbReference type="FunFam" id="2.40.30.10:FF:000040">
    <property type="entry name" value="Peptide chain release factor 3"/>
    <property type="match status" value="1"/>
</dbReference>
<dbReference type="FunFam" id="3.30.70.3280:FF:000001">
    <property type="entry name" value="Peptide chain release factor 3"/>
    <property type="match status" value="1"/>
</dbReference>
<dbReference type="FunFam" id="3.40.50.300:FF:000542">
    <property type="entry name" value="Peptide chain release factor 3"/>
    <property type="match status" value="1"/>
</dbReference>
<dbReference type="Gene3D" id="3.40.50.300">
    <property type="entry name" value="P-loop containing nucleotide triphosphate hydrolases"/>
    <property type="match status" value="2"/>
</dbReference>
<dbReference type="Gene3D" id="3.30.70.3280">
    <property type="entry name" value="Peptide chain release factor 3, domain III"/>
    <property type="match status" value="1"/>
</dbReference>
<dbReference type="HAMAP" id="MF_00072">
    <property type="entry name" value="Rel_fac_3"/>
    <property type="match status" value="1"/>
</dbReference>
<dbReference type="InterPro" id="IPR053905">
    <property type="entry name" value="EF-G-like_DII"/>
</dbReference>
<dbReference type="InterPro" id="IPR035647">
    <property type="entry name" value="EFG_III/V"/>
</dbReference>
<dbReference type="InterPro" id="IPR031157">
    <property type="entry name" value="G_TR_CS"/>
</dbReference>
<dbReference type="InterPro" id="IPR027417">
    <property type="entry name" value="P-loop_NTPase"/>
</dbReference>
<dbReference type="InterPro" id="IPR004548">
    <property type="entry name" value="PrfC"/>
</dbReference>
<dbReference type="InterPro" id="IPR032090">
    <property type="entry name" value="RF3_C"/>
</dbReference>
<dbReference type="InterPro" id="IPR038467">
    <property type="entry name" value="RF3_dom_3_sf"/>
</dbReference>
<dbReference type="InterPro" id="IPR041732">
    <property type="entry name" value="RF3_GTP-bd"/>
</dbReference>
<dbReference type="InterPro" id="IPR005225">
    <property type="entry name" value="Small_GTP-bd"/>
</dbReference>
<dbReference type="InterPro" id="IPR000795">
    <property type="entry name" value="T_Tr_GTP-bd_dom"/>
</dbReference>
<dbReference type="InterPro" id="IPR009000">
    <property type="entry name" value="Transl_B-barrel_sf"/>
</dbReference>
<dbReference type="NCBIfam" id="TIGR00503">
    <property type="entry name" value="prfC"/>
    <property type="match status" value="1"/>
</dbReference>
<dbReference type="NCBIfam" id="NF001964">
    <property type="entry name" value="PRK00741.1"/>
    <property type="match status" value="1"/>
</dbReference>
<dbReference type="NCBIfam" id="TIGR00231">
    <property type="entry name" value="small_GTP"/>
    <property type="match status" value="1"/>
</dbReference>
<dbReference type="PANTHER" id="PTHR43556">
    <property type="entry name" value="PEPTIDE CHAIN RELEASE FACTOR RF3"/>
    <property type="match status" value="1"/>
</dbReference>
<dbReference type="PANTHER" id="PTHR43556:SF2">
    <property type="entry name" value="PEPTIDE CHAIN RELEASE FACTOR RF3"/>
    <property type="match status" value="1"/>
</dbReference>
<dbReference type="Pfam" id="PF22042">
    <property type="entry name" value="EF-G_D2"/>
    <property type="match status" value="1"/>
</dbReference>
<dbReference type="Pfam" id="PF00009">
    <property type="entry name" value="GTP_EFTU"/>
    <property type="match status" value="1"/>
</dbReference>
<dbReference type="Pfam" id="PF16658">
    <property type="entry name" value="RF3_C"/>
    <property type="match status" value="1"/>
</dbReference>
<dbReference type="PRINTS" id="PR00315">
    <property type="entry name" value="ELONGATNFCT"/>
</dbReference>
<dbReference type="SUPFAM" id="SSF54980">
    <property type="entry name" value="EF-G C-terminal domain-like"/>
    <property type="match status" value="1"/>
</dbReference>
<dbReference type="SUPFAM" id="SSF52540">
    <property type="entry name" value="P-loop containing nucleoside triphosphate hydrolases"/>
    <property type="match status" value="1"/>
</dbReference>
<dbReference type="SUPFAM" id="SSF50447">
    <property type="entry name" value="Translation proteins"/>
    <property type="match status" value="1"/>
</dbReference>
<dbReference type="PROSITE" id="PS00301">
    <property type="entry name" value="G_TR_1"/>
    <property type="match status" value="1"/>
</dbReference>
<dbReference type="PROSITE" id="PS51722">
    <property type="entry name" value="G_TR_2"/>
    <property type="match status" value="1"/>
</dbReference>
<gene>
    <name evidence="1" type="primary">prfC</name>
    <name type="ordered locus">YPTB0575</name>
</gene>
<reference key="1">
    <citation type="journal article" date="2004" name="Proc. Natl. Acad. Sci. U.S.A.">
        <title>Insights into the evolution of Yersinia pestis through whole-genome comparison with Yersinia pseudotuberculosis.</title>
        <authorList>
            <person name="Chain P.S.G."/>
            <person name="Carniel E."/>
            <person name="Larimer F.W."/>
            <person name="Lamerdin J."/>
            <person name="Stoutland P.O."/>
            <person name="Regala W.M."/>
            <person name="Georgescu A.M."/>
            <person name="Vergez L.M."/>
            <person name="Land M.L."/>
            <person name="Motin V.L."/>
            <person name="Brubaker R.R."/>
            <person name="Fowler J."/>
            <person name="Hinnebusch J."/>
            <person name="Marceau M."/>
            <person name="Medigue C."/>
            <person name="Simonet M."/>
            <person name="Chenal-Francisque V."/>
            <person name="Souza B."/>
            <person name="Dacheux D."/>
            <person name="Elliott J.M."/>
            <person name="Derbise A."/>
            <person name="Hauser L.J."/>
            <person name="Garcia E."/>
        </authorList>
    </citation>
    <scope>NUCLEOTIDE SEQUENCE [LARGE SCALE GENOMIC DNA]</scope>
    <source>
        <strain>IP32953</strain>
    </source>
</reference>
<protein>
    <recommendedName>
        <fullName evidence="1">Peptide chain release factor 3</fullName>
        <shortName evidence="1">RF-3</shortName>
    </recommendedName>
</protein>
<accession>Q66EW6</accession>
<name>RF3_YERPS</name>
<comment type="function">
    <text evidence="1">Increases the formation of ribosomal termination complexes and stimulates activities of RF-1 and RF-2. It binds guanine nucleotides and has strong preference for UGA stop codons. It may interact directly with the ribosome. The stimulation of RF-1 and RF-2 is significantly reduced by GTP and GDP, but not by GMP.</text>
</comment>
<comment type="subcellular location">
    <subcellularLocation>
        <location evidence="1">Cytoplasm</location>
    </subcellularLocation>
</comment>
<comment type="similarity">
    <text evidence="1">Belongs to the TRAFAC class translation factor GTPase superfamily. Classic translation factor GTPase family. PrfC subfamily.</text>
</comment>
<keyword id="KW-0963">Cytoplasm</keyword>
<keyword id="KW-0342">GTP-binding</keyword>
<keyword id="KW-0547">Nucleotide-binding</keyword>
<keyword id="KW-0648">Protein biosynthesis</keyword>
<feature type="chain" id="PRO_0000242230" description="Peptide chain release factor 3">
    <location>
        <begin position="1"/>
        <end position="529"/>
    </location>
</feature>
<feature type="domain" description="tr-type G">
    <location>
        <begin position="11"/>
        <end position="280"/>
    </location>
</feature>
<feature type="binding site" evidence="1">
    <location>
        <begin position="20"/>
        <end position="27"/>
    </location>
    <ligand>
        <name>GTP</name>
        <dbReference type="ChEBI" id="CHEBI:37565"/>
    </ligand>
</feature>
<feature type="binding site" evidence="1">
    <location>
        <begin position="88"/>
        <end position="92"/>
    </location>
    <ligand>
        <name>GTP</name>
        <dbReference type="ChEBI" id="CHEBI:37565"/>
    </ligand>
</feature>
<feature type="binding site" evidence="1">
    <location>
        <begin position="142"/>
        <end position="145"/>
    </location>
    <ligand>
        <name>GTP</name>
        <dbReference type="ChEBI" id="CHEBI:37565"/>
    </ligand>
</feature>
<organism>
    <name type="scientific">Yersinia pseudotuberculosis serotype I (strain IP32953)</name>
    <dbReference type="NCBI Taxonomy" id="273123"/>
    <lineage>
        <taxon>Bacteria</taxon>
        <taxon>Pseudomonadati</taxon>
        <taxon>Pseudomonadota</taxon>
        <taxon>Gammaproteobacteria</taxon>
        <taxon>Enterobacterales</taxon>
        <taxon>Yersiniaceae</taxon>
        <taxon>Yersinia</taxon>
    </lineage>
</organism>